<evidence type="ECO:0000250" key="1">
    <source>
        <dbReference type="UniProtKB" id="P05484"/>
    </source>
</evidence>
<evidence type="ECO:0000255" key="2"/>
<evidence type="ECO:0000269" key="3">
    <source>
    </source>
</evidence>
<evidence type="ECO:0000303" key="4">
    <source>
    </source>
</evidence>
<evidence type="ECO:0000305" key="5"/>
<evidence type="ECO:0000305" key="6">
    <source>
    </source>
</evidence>
<protein>
    <recommendedName>
        <fullName evidence="4">Omega conotoxin-CVIE</fullName>
    </recommendedName>
    <alternativeName>
        <fullName evidence="5">Omega conotoxin-CVIE-2</fullName>
    </alternativeName>
</protein>
<reference key="1">
    <citation type="journal article" date="2004" name="Proc. R. Soc. B">
        <title>Gene expression and feeding ecology: evolution of piscivory in the venomous gastropod genus Conus.</title>
        <authorList>
            <person name="Duda T.F. Jr."/>
            <person name="Palumbi S.R."/>
        </authorList>
    </citation>
    <scope>NUCLEOTIDE SEQUENCE [GENOMIC DNA]</scope>
</reference>
<reference key="2">
    <citation type="journal article" date="2010" name="Mol. Pharmacol.">
        <title>Analgesic (omega)-conotoxins CVIE and CVIF selectively and voltage-dependently block recombinant and native N-type calcium channels.</title>
        <authorList>
            <person name="Berecki G."/>
            <person name="Motin L."/>
            <person name="Haythornthwaite A."/>
            <person name="Vink S."/>
            <person name="Bansal P."/>
            <person name="Drinkwater R."/>
            <person name="Wang C.I."/>
            <person name="Moretta M."/>
            <person name="Lewis R.J."/>
            <person name="Alewood P.F."/>
            <person name="Christie M.J."/>
            <person name="Adams D.J."/>
        </authorList>
    </citation>
    <scope>NUCLEOTIDE SEQUENCE [MRNA]</scope>
    <scope>SYNTHESIS OF 41-65</scope>
    <scope>FUNCTION</scope>
    <scope>BIOASSAY</scope>
    <scope>3D-STRUCTURE MODELING</scope>
    <source>
        <tissue>Venom duct</tissue>
    </source>
</reference>
<reference key="3">
    <citation type="journal article" date="2011" name="Mol. Pharmacol.">
        <title>Correction to 'Analgesic omega-Conotoxins CVIE and CVIF Selectively and Voltage-Dependently Block Recombinant and Native N-Type Calcium Channels'.</title>
        <authorList>
            <person name="Berecki G."/>
            <person name="Motin L."/>
            <person name="Haythornthwaite A."/>
            <person name="Vink S."/>
            <person name="Bansal P."/>
            <person name="Drinkwater R."/>
            <person name="Wang C.I."/>
            <person name="Moretta M."/>
            <person name="Lewis R.J."/>
            <person name="Alewood P.F."/>
            <person name="Christie M.J."/>
            <person name="Adams D.J."/>
        </authorList>
    </citation>
    <scope>ERRATUM OF PUBMED:19892914</scope>
</reference>
<reference key="4">
    <citation type="journal article" date="2014" name="Br. J. Pharmacol.">
        <title>Effects of arginine 10 to lysine substitution on omega-conotoxin CVIE and CVIF block of Cav2.2 channels.</title>
        <authorList>
            <person name="Berecki G."/>
            <person name="Daly N.L."/>
            <person name="Huang Y.H."/>
            <person name="Vink S."/>
            <person name="Craik D.J."/>
            <person name="Alewood P.F."/>
            <person name="Adams D.J."/>
        </authorList>
    </citation>
    <scope>MUTAGENESIS OF ARG-50</scope>
</reference>
<organism>
    <name type="scientific">Conus catus</name>
    <name type="common">Cat cone</name>
    <dbReference type="NCBI Taxonomy" id="101291"/>
    <lineage>
        <taxon>Eukaryota</taxon>
        <taxon>Metazoa</taxon>
        <taxon>Spiralia</taxon>
        <taxon>Lophotrochozoa</taxon>
        <taxon>Mollusca</taxon>
        <taxon>Gastropoda</taxon>
        <taxon>Caenogastropoda</taxon>
        <taxon>Neogastropoda</taxon>
        <taxon>Conoidea</taxon>
        <taxon>Conidae</taxon>
        <taxon>Conus</taxon>
        <taxon>Pionoconus</taxon>
    </lineage>
</organism>
<comment type="function">
    <text evidence="3">Omega-conotoxins act at presynaptic membranes, they bind and block voltage-gated calcium channels. This toxin blocks N-type calcium channels (Cav2.2/CACNA1B). It shows a higher potency when Cav2.2/CACNA1B is only expressed with the ancillary subunit CACNB3 (IC(50)=0.12 nM) than on Cav2.2/CACNA1B expressed with the ancillary subunits CACNA2D1 and CACNB3 (IC(50)=2.6 nM). The Cav2.2/CACNA1B block by this toxin is voltage-independent, whereas the recovery from toxin block is voltage-dependent (PubMed:19892914). There is a low recovery at physiological membrane potential and a high recovery with hyperpolarized potential (PubMed:19892914). This indicates that the toxin has a higher affinity for Cav2.2/CACNA1B in the inactivated state (PubMed:19892914). It is noteworthy that ancillary subunits beta modulate recovery from this toxin block (PubMed:19892914). Cav2.2/CACNA1B expressed with the ancillary subunit CACNB2a (isoform 2a) almost recover completely from this toxin block, whereas Cav2.2/CACNA1B expressed with CACNB3 exhibits relatively weak recovery (PubMed:19892914). Inhibition by this toxin of excitatory synaptic transmission is reversible (PubMed:19892914). In vivo, when tested on rat model of persistent pain, this toxin blocks chronic pain behavior (PubMed:19892914).</text>
</comment>
<comment type="subcellular location">
    <subcellularLocation>
        <location evidence="6">Secreted</location>
    </subcellularLocation>
</comment>
<comment type="tissue specificity">
    <text evidence="6">Expressed by the venom duct.</text>
</comment>
<comment type="domain">
    <text evidence="1">The presence of a 'disulfide through disulfide knot' structurally defines this protein as a knottin.</text>
</comment>
<comment type="domain">
    <text evidence="5">The cysteine framework is VI/VII (C-C-CC-C-C).</text>
</comment>
<comment type="miscellaneous">
    <text evidence="3">Negative results: does not show effect on Cav1.2/CACNA1C, Cav1.3/CACNA1D, and Cav2.3/CACNA1E and shows a very little inhibition on Cav2.1/CACNA1A.</text>
</comment>
<comment type="similarity">
    <text evidence="5">Belongs to the conotoxin O1 superfamily.</text>
</comment>
<comment type="caution">
    <text evidence="5">This sequence is published under the name CVIE but another peptide with a different sequence and a different pharmacological family is already published with this name (see AC P69751).</text>
</comment>
<feature type="signal peptide" evidence="2">
    <location>
        <begin position="1" status="less than"/>
        <end position="17"/>
    </location>
</feature>
<feature type="propeptide" id="PRO_0000446315" evidence="5">
    <location>
        <begin position="18"/>
        <end position="40"/>
    </location>
</feature>
<feature type="peptide" id="PRO_5007717414" description="Omega conotoxin-CVIE" evidence="6">
    <location>
        <begin position="41"/>
        <end position="65"/>
    </location>
</feature>
<feature type="modified residue" description="Cysteine amide" evidence="1">
    <location>
        <position position="65"/>
    </location>
</feature>
<feature type="disulfide bond" evidence="1">
    <location>
        <begin position="41"/>
        <end position="56"/>
    </location>
</feature>
<feature type="disulfide bond" evidence="1">
    <location>
        <begin position="48"/>
        <end position="60"/>
    </location>
</feature>
<feature type="disulfide bond" evidence="1">
    <location>
        <begin position="55"/>
        <end position="65"/>
    </location>
</feature>
<feature type="mutagenesis site" description="Alters the kinetics of action and improves reversibility without diminishing conotoxin potency and specificity for Cav2.2/CACNA1B and without diminishing the serum stability." evidence="3">
    <original>R</original>
    <variation>K</variation>
    <location>
        <position position="50"/>
    </location>
</feature>
<feature type="non-terminal residue">
    <location>
        <position position="1"/>
    </location>
</feature>
<sequence length="66" mass="7053">VVIVAVLLLTACQLITANDSRGTQKHRALRSDTKLSMSTRCKGKGASCRRTSYDCCTGSCRSGRCG</sequence>
<accession>Q9N633</accession>
<name>O16E_CONCT</name>
<keyword id="KW-0027">Amidation</keyword>
<keyword id="KW-1015">Disulfide bond</keyword>
<keyword id="KW-0960">Knottin</keyword>
<keyword id="KW-0964">Secreted</keyword>
<keyword id="KW-0732">Signal</keyword>
<proteinExistence type="evidence at protein level"/>
<dbReference type="EMBL" id="AF174214">
    <property type="protein sequence ID" value="AAF89878.1"/>
    <property type="molecule type" value="Genomic_DNA"/>
</dbReference>
<dbReference type="EMBL" id="AF174215">
    <property type="protein sequence ID" value="AAF89879.1"/>
    <property type="molecule type" value="Genomic_DNA"/>
</dbReference>
<dbReference type="EMBL" id="AF174219">
    <property type="protein sequence ID" value="AAF89883.1"/>
    <property type="molecule type" value="Genomic_DNA"/>
</dbReference>
<dbReference type="SMR" id="Q9N633"/>
<dbReference type="ConoServer" id="1188">
    <property type="toxin name" value="CVIE precursor"/>
</dbReference>
<dbReference type="GO" id="GO:0005576">
    <property type="term" value="C:extracellular region"/>
    <property type="evidence" value="ECO:0007669"/>
    <property type="project" value="UniProtKB-SubCell"/>
</dbReference>
<dbReference type="GO" id="GO:0008200">
    <property type="term" value="F:ion channel inhibitor activity"/>
    <property type="evidence" value="ECO:0007669"/>
    <property type="project" value="InterPro"/>
</dbReference>
<dbReference type="InterPro" id="IPR004214">
    <property type="entry name" value="Conotoxin"/>
</dbReference>
<dbReference type="InterPro" id="IPR012321">
    <property type="entry name" value="Conotoxin_omega-typ_CS"/>
</dbReference>
<dbReference type="Pfam" id="PF02950">
    <property type="entry name" value="Conotoxin"/>
    <property type="match status" value="1"/>
</dbReference>
<dbReference type="SUPFAM" id="SSF57059">
    <property type="entry name" value="omega toxin-like"/>
    <property type="match status" value="1"/>
</dbReference>
<dbReference type="PROSITE" id="PS60004">
    <property type="entry name" value="OMEGA_CONOTOXIN"/>
    <property type="match status" value="1"/>
</dbReference>